<reference key="1">
    <citation type="submission" date="2000-08" db="EMBL/GenBank/DDBJ databases">
        <title>cDNA cloning of serine proteinases from the venom of Trimeresurus jerdonii.</title>
        <authorList>
            <person name="Lu Q.M."/>
            <person name="Jin Y."/>
            <person name="Wei J.F."/>
            <person name="Wang W.Y."/>
            <person name="Xiong Y.L."/>
        </authorList>
    </citation>
    <scope>NUCLEOTIDE SEQUENCE [MRNA]</scope>
    <source>
        <tissue>Venom gland</tissue>
    </source>
</reference>
<sequence length="258" mass="28025">MVLIRVLANLLILQLSYAQKSSELIIGGHPCNINEHRSLVVLFNSSGLLCSGTLINKEWVLTAAHCDSNNFQLLFGVHSKKVLNEDEQTRDPKEKFICPNKKKDDEKDKDIMLIRLDSSVSNSEHIAPLSLPSSPPSVGSACRVMGWGKTIPTKDTYPDVPHCANINILDHAVCRAAYSNLLEKSKTLCAGILQGGKDTCQFDSGGPLICNGQVQGIVSWGGHPCGQPHALGVYTNVFNYTDWIQSIIAGNTDATCPP</sequence>
<proteinExistence type="evidence at transcript level"/>
<accession>Q9DF66</accession>
<evidence type="ECO:0000250" key="1"/>
<evidence type="ECO:0000255" key="2"/>
<evidence type="ECO:0000255" key="3">
    <source>
        <dbReference type="PROSITE-ProRule" id="PRU00274"/>
    </source>
</evidence>
<name>VSP3_PROJR</name>
<keyword id="KW-1015">Disulfide bond</keyword>
<keyword id="KW-0325">Glycoprotein</keyword>
<keyword id="KW-1199">Hemostasis impairing toxin</keyword>
<keyword id="KW-0378">Hydrolase</keyword>
<keyword id="KW-0645">Protease</keyword>
<keyword id="KW-0964">Secreted</keyword>
<keyword id="KW-0720">Serine protease</keyword>
<keyword id="KW-0732">Signal</keyword>
<keyword id="KW-0800">Toxin</keyword>
<keyword id="KW-0865">Zymogen</keyword>
<feature type="signal peptide" evidence="1">
    <location>
        <begin position="1"/>
        <end position="18"/>
    </location>
</feature>
<feature type="propeptide" id="PRO_0000028405" evidence="1">
    <location>
        <begin position="19"/>
        <end position="24"/>
    </location>
</feature>
<feature type="chain" id="PRO_0000028406" description="Snake venom serine protease 3">
    <location>
        <begin position="25"/>
        <end position="258"/>
    </location>
</feature>
<feature type="domain" description="Peptidase S1" evidence="3">
    <location>
        <begin position="25"/>
        <end position="249"/>
    </location>
</feature>
<feature type="active site" description="Charge relay system" evidence="1">
    <location>
        <position position="65"/>
    </location>
</feature>
<feature type="active site" description="Charge relay system" evidence="1">
    <location>
        <position position="110"/>
    </location>
</feature>
<feature type="active site" description="Charge relay system" evidence="1">
    <location>
        <position position="204"/>
    </location>
</feature>
<feature type="glycosylation site" description="N-linked (GlcNAc...) asparagine" evidence="2">
    <location>
        <position position="44"/>
    </location>
</feature>
<feature type="glycosylation site" description="N-linked (GlcNAc...) asparagine" evidence="2">
    <location>
        <position position="239"/>
    </location>
</feature>
<feature type="disulfide bond" evidence="3">
    <location>
        <begin position="31"/>
        <end position="163"/>
    </location>
</feature>
<feature type="disulfide bond" evidence="3">
    <location>
        <begin position="50"/>
        <end position="66"/>
    </location>
</feature>
<feature type="disulfide bond" evidence="3">
    <location>
        <begin position="98"/>
        <end position="256"/>
    </location>
</feature>
<feature type="disulfide bond" evidence="3">
    <location>
        <begin position="142"/>
        <end position="210"/>
    </location>
</feature>
<feature type="disulfide bond" evidence="3">
    <location>
        <begin position="174"/>
        <end position="189"/>
    </location>
</feature>
<feature type="disulfide bond" evidence="3">
    <location>
        <begin position="200"/>
        <end position="225"/>
    </location>
</feature>
<comment type="function">
    <text evidence="1">Snake venom serine protease that may act in the hemostasis system of the prey.</text>
</comment>
<comment type="subunit">
    <text evidence="1">Monomer.</text>
</comment>
<comment type="subcellular location">
    <subcellularLocation>
        <location>Secreted</location>
    </subcellularLocation>
</comment>
<comment type="tissue specificity">
    <text>Expressed by the venom gland.</text>
</comment>
<comment type="similarity">
    <text evidence="3">Belongs to the peptidase S1 family. Snake venom subfamily.</text>
</comment>
<organism>
    <name type="scientific">Protobothrops jerdonii</name>
    <name type="common">Jerdon's pitviper</name>
    <name type="synonym">Trimeresurus jerdonii</name>
    <dbReference type="NCBI Taxonomy" id="242841"/>
    <lineage>
        <taxon>Eukaryota</taxon>
        <taxon>Metazoa</taxon>
        <taxon>Chordata</taxon>
        <taxon>Craniata</taxon>
        <taxon>Vertebrata</taxon>
        <taxon>Euteleostomi</taxon>
        <taxon>Lepidosauria</taxon>
        <taxon>Squamata</taxon>
        <taxon>Bifurcata</taxon>
        <taxon>Unidentata</taxon>
        <taxon>Episquamata</taxon>
        <taxon>Toxicofera</taxon>
        <taxon>Serpentes</taxon>
        <taxon>Colubroidea</taxon>
        <taxon>Viperidae</taxon>
        <taxon>Crotalinae</taxon>
        <taxon>Protobothrops</taxon>
    </lineage>
</organism>
<dbReference type="EC" id="3.4.21.-"/>
<dbReference type="EMBL" id="AF292112">
    <property type="protein sequence ID" value="AAG10790.1"/>
    <property type="molecule type" value="mRNA"/>
</dbReference>
<dbReference type="SMR" id="Q9DF66"/>
<dbReference type="MEROPS" id="S01.186"/>
<dbReference type="GO" id="GO:0005576">
    <property type="term" value="C:extracellular region"/>
    <property type="evidence" value="ECO:0007669"/>
    <property type="project" value="UniProtKB-SubCell"/>
</dbReference>
<dbReference type="GO" id="GO:0030141">
    <property type="term" value="C:secretory granule"/>
    <property type="evidence" value="ECO:0007669"/>
    <property type="project" value="TreeGrafter"/>
</dbReference>
<dbReference type="GO" id="GO:0004252">
    <property type="term" value="F:serine-type endopeptidase activity"/>
    <property type="evidence" value="ECO:0007669"/>
    <property type="project" value="InterPro"/>
</dbReference>
<dbReference type="GO" id="GO:0090729">
    <property type="term" value="F:toxin activity"/>
    <property type="evidence" value="ECO:0007669"/>
    <property type="project" value="UniProtKB-KW"/>
</dbReference>
<dbReference type="GO" id="GO:0006508">
    <property type="term" value="P:proteolysis"/>
    <property type="evidence" value="ECO:0007669"/>
    <property type="project" value="UniProtKB-KW"/>
</dbReference>
<dbReference type="CDD" id="cd00190">
    <property type="entry name" value="Tryp_SPc"/>
    <property type="match status" value="1"/>
</dbReference>
<dbReference type="FunFam" id="2.40.10.10:FF:000158">
    <property type="entry name" value="Thrombin-like enzyme saxthrombin"/>
    <property type="match status" value="1"/>
</dbReference>
<dbReference type="FunFam" id="2.40.10.10:FF:000153">
    <property type="entry name" value="Venom plasminogen activator TSV-PA"/>
    <property type="match status" value="1"/>
</dbReference>
<dbReference type="Gene3D" id="2.40.10.10">
    <property type="entry name" value="Trypsin-like serine proteases"/>
    <property type="match status" value="2"/>
</dbReference>
<dbReference type="InterPro" id="IPR009003">
    <property type="entry name" value="Peptidase_S1_PA"/>
</dbReference>
<dbReference type="InterPro" id="IPR043504">
    <property type="entry name" value="Peptidase_S1_PA_chymotrypsin"/>
</dbReference>
<dbReference type="InterPro" id="IPR001314">
    <property type="entry name" value="Peptidase_S1A"/>
</dbReference>
<dbReference type="InterPro" id="IPR001254">
    <property type="entry name" value="Trypsin_dom"/>
</dbReference>
<dbReference type="InterPro" id="IPR018114">
    <property type="entry name" value="TRYPSIN_HIS"/>
</dbReference>
<dbReference type="PANTHER" id="PTHR24271:SF47">
    <property type="entry name" value="KALLIKREIN-1"/>
    <property type="match status" value="1"/>
</dbReference>
<dbReference type="PANTHER" id="PTHR24271">
    <property type="entry name" value="KALLIKREIN-RELATED"/>
    <property type="match status" value="1"/>
</dbReference>
<dbReference type="Pfam" id="PF00089">
    <property type="entry name" value="Trypsin"/>
    <property type="match status" value="1"/>
</dbReference>
<dbReference type="PRINTS" id="PR00722">
    <property type="entry name" value="CHYMOTRYPSIN"/>
</dbReference>
<dbReference type="SMART" id="SM00020">
    <property type="entry name" value="Tryp_SPc"/>
    <property type="match status" value="1"/>
</dbReference>
<dbReference type="SUPFAM" id="SSF50494">
    <property type="entry name" value="Trypsin-like serine proteases"/>
    <property type="match status" value="1"/>
</dbReference>
<dbReference type="PROSITE" id="PS50240">
    <property type="entry name" value="TRYPSIN_DOM"/>
    <property type="match status" value="1"/>
</dbReference>
<dbReference type="PROSITE" id="PS00134">
    <property type="entry name" value="TRYPSIN_HIS"/>
    <property type="match status" value="1"/>
</dbReference>
<protein>
    <recommendedName>
        <fullName>Snake venom serine protease 3</fullName>
        <shortName>SP3</shortName>
        <shortName>SVSP</shortName>
        <ecNumber>3.4.21.-</ecNumber>
    </recommendedName>
</protein>